<evidence type="ECO:0000305" key="1"/>
<sequence>MKAEIIAVGTEILTGQIVNTNAQFLSEKLAEIGVDVYFQTAVGDNEVRLLSLLEIASQRSSLVILTGGLGPTEDDLTKQTLAKFLGKALVFDPQAQEKLDIFFTLRPDYARTPNNERQAQIVEGAIPLPNETGLAVGGKLEVDGVTYVVLPGPPSELKPMVLNQLLPKLMTGSKLYSRVLRFFGIGESQLVTILADLIDNQIDPTLAPYAKTGEVTLRLSTKASSQEEANQALDILENQILDCQTFEGISLRDFCYGYGEETSLASIVVEELKRQGKTIAAAESLTAGLFQATVANFSGVSSIFKGGFVTYSLEEKSRMLDIPAKNLEEHGVVSEFTAQKMAEQARSKTQSDFGISLTGVAGPDSLEGHPVGTVFIGLAQDQGTEVIKVNIGGRSRADVRHIAVMHAFNLVRKALLSD</sequence>
<dbReference type="EMBL" id="Z34303">
    <property type="protein sequence ID" value="CAA84071.1"/>
    <property type="molecule type" value="Genomic_DNA"/>
</dbReference>
<dbReference type="EMBL" id="L36131">
    <property type="protein sequence ID" value="AAC09382.1"/>
    <property type="molecule type" value="Genomic_DNA"/>
</dbReference>
<dbReference type="EMBL" id="AE005672">
    <property type="protein sequence ID" value="AAK76009.1"/>
    <property type="molecule type" value="Genomic_DNA"/>
</dbReference>
<dbReference type="PIR" id="D98091">
    <property type="entry name" value="D98091"/>
</dbReference>
<dbReference type="PIR" id="H95226">
    <property type="entry name" value="H95226"/>
</dbReference>
<dbReference type="RefSeq" id="WP_000642718.1">
    <property type="nucleotide sequence ID" value="NZ_CP155539.1"/>
</dbReference>
<dbReference type="SMR" id="P54184"/>
<dbReference type="PaxDb" id="170187-SP_1941"/>
<dbReference type="EnsemblBacteria" id="AAK76009">
    <property type="protein sequence ID" value="AAK76009"/>
    <property type="gene ID" value="SP_1941"/>
</dbReference>
<dbReference type="KEGG" id="spn:SP_1941"/>
<dbReference type="eggNOG" id="COG1058">
    <property type="taxonomic scope" value="Bacteria"/>
</dbReference>
<dbReference type="eggNOG" id="COG1546">
    <property type="taxonomic scope" value="Bacteria"/>
</dbReference>
<dbReference type="PhylomeDB" id="P54184"/>
<dbReference type="BioCyc" id="SPNE170187:G1FZB-1996-MONOMER"/>
<dbReference type="Proteomes" id="UP000000585">
    <property type="component" value="Chromosome"/>
</dbReference>
<dbReference type="CDD" id="cd00885">
    <property type="entry name" value="cinA"/>
    <property type="match status" value="1"/>
</dbReference>
<dbReference type="Gene3D" id="3.30.70.2860">
    <property type="match status" value="1"/>
</dbReference>
<dbReference type="Gene3D" id="3.90.950.20">
    <property type="entry name" value="CinA-like"/>
    <property type="match status" value="1"/>
</dbReference>
<dbReference type="Gene3D" id="3.40.980.10">
    <property type="entry name" value="MoaB/Mog-like domain"/>
    <property type="match status" value="1"/>
</dbReference>
<dbReference type="HAMAP" id="MF_00226_B">
    <property type="entry name" value="CinA_B"/>
    <property type="match status" value="1"/>
</dbReference>
<dbReference type="InterPro" id="IPR050101">
    <property type="entry name" value="CinA"/>
</dbReference>
<dbReference type="InterPro" id="IPR036653">
    <property type="entry name" value="CinA-like_C"/>
</dbReference>
<dbReference type="InterPro" id="IPR008136">
    <property type="entry name" value="CinA_C"/>
</dbReference>
<dbReference type="InterPro" id="IPR041424">
    <property type="entry name" value="CinA_KH"/>
</dbReference>
<dbReference type="InterPro" id="IPR008135">
    <property type="entry name" value="Competence-induced_CinA"/>
</dbReference>
<dbReference type="InterPro" id="IPR036425">
    <property type="entry name" value="MoaB/Mog-like_dom_sf"/>
</dbReference>
<dbReference type="InterPro" id="IPR001453">
    <property type="entry name" value="MoaB/Mog_dom"/>
</dbReference>
<dbReference type="NCBIfam" id="TIGR00200">
    <property type="entry name" value="cinA_nterm"/>
    <property type="match status" value="1"/>
</dbReference>
<dbReference type="NCBIfam" id="TIGR00199">
    <property type="entry name" value="PncC_domain"/>
    <property type="match status" value="1"/>
</dbReference>
<dbReference type="NCBIfam" id="NF001813">
    <property type="entry name" value="PRK00549.1"/>
    <property type="match status" value="1"/>
</dbReference>
<dbReference type="PANTHER" id="PTHR13939">
    <property type="entry name" value="NICOTINAMIDE-NUCLEOTIDE AMIDOHYDROLASE PNCC"/>
    <property type="match status" value="1"/>
</dbReference>
<dbReference type="PANTHER" id="PTHR13939:SF0">
    <property type="entry name" value="NMN AMIDOHYDROLASE-LIKE PROTEIN YFAY"/>
    <property type="match status" value="1"/>
</dbReference>
<dbReference type="Pfam" id="PF02464">
    <property type="entry name" value="CinA"/>
    <property type="match status" value="1"/>
</dbReference>
<dbReference type="Pfam" id="PF18146">
    <property type="entry name" value="CinA_KH"/>
    <property type="match status" value="1"/>
</dbReference>
<dbReference type="Pfam" id="PF00994">
    <property type="entry name" value="MoCF_biosynth"/>
    <property type="match status" value="1"/>
</dbReference>
<dbReference type="PIRSF" id="PIRSF006728">
    <property type="entry name" value="CinA"/>
    <property type="match status" value="1"/>
</dbReference>
<dbReference type="SMART" id="SM00852">
    <property type="entry name" value="MoCF_biosynth"/>
    <property type="match status" value="1"/>
</dbReference>
<dbReference type="SUPFAM" id="SSF142433">
    <property type="entry name" value="CinA-like"/>
    <property type="match status" value="1"/>
</dbReference>
<dbReference type="SUPFAM" id="SSF53218">
    <property type="entry name" value="Molybdenum cofactor biosynthesis proteins"/>
    <property type="match status" value="1"/>
</dbReference>
<name>CINA_STRPN</name>
<proteinExistence type="evidence at transcript level"/>
<reference key="1">
    <citation type="journal article" date="1995" name="Mol. Microbiol.">
        <title>The recA gene of Streptococcus pneumoniae is part of a competence-induced operon and controls lysogenic induction.</title>
        <authorList>
            <person name="Martin B."/>
            <person name="Garcia P."/>
            <person name="Castanie M.-P."/>
            <person name="Claverys J.-P."/>
        </authorList>
    </citation>
    <scope>NUCLEOTIDE SEQUENCE [GENOMIC DNA]</scope>
    <source>
        <strain>R6 / R800</strain>
    </source>
</reference>
<reference key="2">
    <citation type="journal article" date="1995" name="J. Bacteriol.">
        <title>The rec locus, a competence-induced operon in Streptococcus pneumoniae.</title>
        <authorList>
            <person name="Pearce B.J."/>
            <person name="Naughton A.M."/>
            <person name="Campbell E.A."/>
            <person name="Masure H.R."/>
        </authorList>
    </citation>
    <scope>NUCLEOTIDE SEQUENCE [GENOMIC DNA]</scope>
    <source>
        <strain>R6x</strain>
    </source>
</reference>
<reference key="3">
    <citation type="journal article" date="2001" name="Science">
        <title>Complete genome sequence of a virulent isolate of Streptococcus pneumoniae.</title>
        <authorList>
            <person name="Tettelin H."/>
            <person name="Nelson K.E."/>
            <person name="Paulsen I.T."/>
            <person name="Eisen J.A."/>
            <person name="Read T.D."/>
            <person name="Peterson S.N."/>
            <person name="Heidelberg J.F."/>
            <person name="DeBoy R.T."/>
            <person name="Haft D.H."/>
            <person name="Dodson R.J."/>
            <person name="Durkin A.S."/>
            <person name="Gwinn M.L."/>
            <person name="Kolonay J.F."/>
            <person name="Nelson W.C."/>
            <person name="Peterson J.D."/>
            <person name="Umayam L.A."/>
            <person name="White O."/>
            <person name="Salzberg S.L."/>
            <person name="Lewis M.R."/>
            <person name="Radune D."/>
            <person name="Holtzapple E.K."/>
            <person name="Khouri H.M."/>
            <person name="Wolf A.M."/>
            <person name="Utterback T.R."/>
            <person name="Hansen C.L."/>
            <person name="McDonald L.A."/>
            <person name="Feldblyum T.V."/>
            <person name="Angiuoli S.V."/>
            <person name="Dickinson T."/>
            <person name="Hickey E.K."/>
            <person name="Holt I.E."/>
            <person name="Loftus B.J."/>
            <person name="Yang F."/>
            <person name="Smith H.O."/>
            <person name="Venter J.C."/>
            <person name="Dougherty B.A."/>
            <person name="Morrison D.A."/>
            <person name="Hollingshead S.K."/>
            <person name="Fraser C.M."/>
        </authorList>
    </citation>
    <scope>NUCLEOTIDE SEQUENCE [LARGE SCALE GENOMIC DNA]</scope>
    <source>
        <strain>ATCC BAA-334 / TIGR4</strain>
    </source>
</reference>
<accession>P54184</accession>
<accession>Q54853</accession>
<gene>
    <name type="primary">cinA</name>
    <name type="synonym">exp10</name>
    <name type="ordered locus">SP_1941</name>
</gene>
<keyword id="KW-1185">Reference proteome</keyword>
<protein>
    <recommendedName>
        <fullName>Putative competence-damage inducible protein</fullName>
    </recommendedName>
    <alternativeName>
        <fullName>Exported protein 10</fullName>
    </alternativeName>
</protein>
<organism>
    <name type="scientific">Streptococcus pneumoniae serotype 4 (strain ATCC BAA-334 / TIGR4)</name>
    <dbReference type="NCBI Taxonomy" id="170187"/>
    <lineage>
        <taxon>Bacteria</taxon>
        <taxon>Bacillati</taxon>
        <taxon>Bacillota</taxon>
        <taxon>Bacilli</taxon>
        <taxon>Lactobacillales</taxon>
        <taxon>Streptococcaceae</taxon>
        <taxon>Streptococcus</taxon>
    </lineage>
</organism>
<comment type="induction">
    <text>By competence and damage.</text>
</comment>
<comment type="similarity">
    <text evidence="1">Belongs to the CinA family.</text>
</comment>
<feature type="chain" id="PRO_0000156743" description="Putative competence-damage inducible protein">
    <location>
        <begin position="1"/>
        <end position="418"/>
    </location>
</feature>
<feature type="sequence conflict" description="In Ref. 1; CAA84071 and 2; AAC09382." evidence="1" ref="1 2">
    <original>P</original>
    <variation>A</variation>
    <location>
        <position position="71"/>
    </location>
</feature>
<feature type="sequence conflict" description="In Ref. 1; CAA84071 and 2; AAC09382." evidence="1" ref="1 2">
    <original>T</original>
    <variation>A</variation>
    <location>
        <position position="104"/>
    </location>
</feature>
<feature type="sequence conflict" description="In Ref. 1; CAA84071 and 2; AAC09382." evidence="1" ref="1 2">
    <original>K</original>
    <variation>E</variation>
    <location>
        <position position="305"/>
    </location>
</feature>
<feature type="sequence conflict" description="In Ref. 2; AAC09382." evidence="1" ref="2">
    <original>R</original>
    <variation>Q</variation>
    <location>
        <position position="396"/>
    </location>
</feature>